<name>RL28_PARP8</name>
<proteinExistence type="inferred from homology"/>
<evidence type="ECO:0000255" key="1">
    <source>
        <dbReference type="HAMAP-Rule" id="MF_00373"/>
    </source>
</evidence>
<evidence type="ECO:0000256" key="2">
    <source>
        <dbReference type="SAM" id="MobiDB-lite"/>
    </source>
</evidence>
<evidence type="ECO:0000305" key="3"/>
<reference key="1">
    <citation type="journal article" date="2014" name="Stand. Genomic Sci.">
        <title>Complete genome sequence of Burkholderia phymatum STM815(T), a broad host range and efficient nitrogen-fixing symbiont of Mimosa species.</title>
        <authorList>
            <person name="Moulin L."/>
            <person name="Klonowska A."/>
            <person name="Caroline B."/>
            <person name="Booth K."/>
            <person name="Vriezen J.A."/>
            <person name="Melkonian R."/>
            <person name="James E.K."/>
            <person name="Young J.P."/>
            <person name="Bena G."/>
            <person name="Hauser L."/>
            <person name="Land M."/>
            <person name="Kyrpides N."/>
            <person name="Bruce D."/>
            <person name="Chain P."/>
            <person name="Copeland A."/>
            <person name="Pitluck S."/>
            <person name="Woyke T."/>
            <person name="Lizotte-Waniewski M."/>
            <person name="Bristow J."/>
            <person name="Riley M."/>
        </authorList>
    </citation>
    <scope>NUCLEOTIDE SEQUENCE [LARGE SCALE GENOMIC DNA]</scope>
    <source>
        <strain>DSM 17167 / CIP 108236 / LMG 21445 / STM815</strain>
    </source>
</reference>
<gene>
    <name evidence="1" type="primary">rpmB</name>
    <name type="ordered locus">Bphy_0584</name>
</gene>
<sequence length="77" mass="8761">MARVCQVTGKAPMSGNNVSHANNKTKRRFLPNLQNRRFWVESENRWVRLRVSNAGLRLIDKNGIDSVLADLRARGEA</sequence>
<protein>
    <recommendedName>
        <fullName evidence="1">Large ribosomal subunit protein bL28</fullName>
    </recommendedName>
    <alternativeName>
        <fullName evidence="3">50S ribosomal protein L28</fullName>
    </alternativeName>
</protein>
<accession>B2JDZ9</accession>
<feature type="chain" id="PRO_1000121598" description="Large ribosomal subunit protein bL28">
    <location>
        <begin position="1"/>
        <end position="77"/>
    </location>
</feature>
<feature type="region of interest" description="Disordered" evidence="2">
    <location>
        <begin position="1"/>
        <end position="25"/>
    </location>
</feature>
<keyword id="KW-1185">Reference proteome</keyword>
<keyword id="KW-0687">Ribonucleoprotein</keyword>
<keyword id="KW-0689">Ribosomal protein</keyword>
<dbReference type="EMBL" id="CP001043">
    <property type="protein sequence ID" value="ACC69775.1"/>
    <property type="molecule type" value="Genomic_DNA"/>
</dbReference>
<dbReference type="RefSeq" id="WP_004186391.1">
    <property type="nucleotide sequence ID" value="NZ_CADFGH010000001.1"/>
</dbReference>
<dbReference type="SMR" id="B2JDZ9"/>
<dbReference type="STRING" id="391038.Bphy_0584"/>
<dbReference type="GeneID" id="98107656"/>
<dbReference type="KEGG" id="bph:Bphy_0584"/>
<dbReference type="eggNOG" id="COG0227">
    <property type="taxonomic scope" value="Bacteria"/>
</dbReference>
<dbReference type="HOGENOM" id="CLU_064548_3_1_4"/>
<dbReference type="OrthoDB" id="9805609at2"/>
<dbReference type="Proteomes" id="UP000001192">
    <property type="component" value="Chromosome 1"/>
</dbReference>
<dbReference type="GO" id="GO:0022625">
    <property type="term" value="C:cytosolic large ribosomal subunit"/>
    <property type="evidence" value="ECO:0007669"/>
    <property type="project" value="TreeGrafter"/>
</dbReference>
<dbReference type="GO" id="GO:0003735">
    <property type="term" value="F:structural constituent of ribosome"/>
    <property type="evidence" value="ECO:0007669"/>
    <property type="project" value="InterPro"/>
</dbReference>
<dbReference type="GO" id="GO:0006412">
    <property type="term" value="P:translation"/>
    <property type="evidence" value="ECO:0007669"/>
    <property type="project" value="UniProtKB-UniRule"/>
</dbReference>
<dbReference type="FunFam" id="2.30.170.40:FF:000001">
    <property type="entry name" value="50S ribosomal protein L28"/>
    <property type="match status" value="1"/>
</dbReference>
<dbReference type="Gene3D" id="2.30.170.40">
    <property type="entry name" value="Ribosomal protein L28/L24"/>
    <property type="match status" value="1"/>
</dbReference>
<dbReference type="HAMAP" id="MF_00373">
    <property type="entry name" value="Ribosomal_bL28"/>
    <property type="match status" value="1"/>
</dbReference>
<dbReference type="InterPro" id="IPR026569">
    <property type="entry name" value="Ribosomal_bL28"/>
</dbReference>
<dbReference type="InterPro" id="IPR034704">
    <property type="entry name" value="Ribosomal_bL28/bL31-like_sf"/>
</dbReference>
<dbReference type="InterPro" id="IPR001383">
    <property type="entry name" value="Ribosomal_bL28_bact-type"/>
</dbReference>
<dbReference type="InterPro" id="IPR037147">
    <property type="entry name" value="Ribosomal_bL28_sf"/>
</dbReference>
<dbReference type="NCBIfam" id="TIGR00009">
    <property type="entry name" value="L28"/>
    <property type="match status" value="1"/>
</dbReference>
<dbReference type="PANTHER" id="PTHR13528">
    <property type="entry name" value="39S RIBOSOMAL PROTEIN L28, MITOCHONDRIAL"/>
    <property type="match status" value="1"/>
</dbReference>
<dbReference type="PANTHER" id="PTHR13528:SF2">
    <property type="entry name" value="LARGE RIBOSOMAL SUBUNIT PROTEIN BL28M"/>
    <property type="match status" value="1"/>
</dbReference>
<dbReference type="Pfam" id="PF00830">
    <property type="entry name" value="Ribosomal_L28"/>
    <property type="match status" value="1"/>
</dbReference>
<dbReference type="SUPFAM" id="SSF143800">
    <property type="entry name" value="L28p-like"/>
    <property type="match status" value="1"/>
</dbReference>
<organism>
    <name type="scientific">Paraburkholderia phymatum (strain DSM 17167 / CIP 108236 / LMG 21445 / STM815)</name>
    <name type="common">Burkholderia phymatum</name>
    <dbReference type="NCBI Taxonomy" id="391038"/>
    <lineage>
        <taxon>Bacteria</taxon>
        <taxon>Pseudomonadati</taxon>
        <taxon>Pseudomonadota</taxon>
        <taxon>Betaproteobacteria</taxon>
        <taxon>Burkholderiales</taxon>
        <taxon>Burkholderiaceae</taxon>
        <taxon>Paraburkholderia</taxon>
    </lineage>
</organism>
<comment type="similarity">
    <text evidence="1">Belongs to the bacterial ribosomal protein bL28 family.</text>
</comment>